<keyword id="KW-0903">Direct protein sequencing</keyword>
<keyword id="KW-1015">Disulfide bond</keyword>
<keyword id="KW-0325">Glycoprotein</keyword>
<keyword id="KW-1199">Hemostasis impairing toxin</keyword>
<keyword id="KW-0378">Hydrolase</keyword>
<keyword id="KW-1202">Platelet aggregation activating toxin</keyword>
<keyword id="KW-0645">Protease</keyword>
<keyword id="KW-0964">Secreted</keyword>
<keyword id="KW-0720">Serine protease</keyword>
<keyword id="KW-0800">Toxin</keyword>
<name>VSP1_BOTJA</name>
<comment type="function">
    <text evidence="3 5">Snake venom serine protease that induces platelet aggregation through activation of protease-activated platelet receptors (PAR1/F2R and PAR4/F2RL3). On F2R, the cleavage occurs at Arg41-Ser42 (like thrombin cleavage), and Arg46-Asn47. In normal condition of hemostasis, the cleavage of the Arg41-Ser42 bond liberates a new N-terminus that functions as an agonist. However after envenomation, the cleavage of Arg46-Asn47 bond degrades this potential agonist. This may explain why the snake protease is less potent than thrombin in causing platelet aggregation and release reaction. On F2RL3, a thrombin-like activity has also been proven by calcium release from lung fibroblasts transfected with this receptor. Possesses amidolytic activities.</text>
</comment>
<comment type="activity regulation">
    <text>Inhibited by PMSF. The amidolytic activity is also inhibited by benzamidine derivatives.</text>
</comment>
<comment type="subunit">
    <text evidence="1">Monomer.</text>
</comment>
<comment type="subcellular location">
    <subcellularLocation>
        <location>Secreted</location>
    </subcellularLocation>
</comment>
<comment type="tissue specificity">
    <text>Expressed by the venom gland.</text>
</comment>
<comment type="developmental stage">
    <text evidence="4">This protein seems to be found in both adult and newborn B.jararaca venoms.</text>
</comment>
<comment type="miscellaneous">
    <text evidence="7">Negative results: does not have fibrinogen-clotting activity.</text>
</comment>
<comment type="similarity">
    <text evidence="2">Belongs to the peptidase S1 family. Snake venom subfamily.</text>
</comment>
<feature type="propeptide" id="PRO_0000416999" evidence="1">
    <location>
        <begin position="1" status="less than"/>
        <end position="5"/>
    </location>
</feature>
<feature type="chain" id="PRO_0000088732" description="Platelet-aggregating proteinase PA-BJ">
    <location>
        <begin position="6"/>
        <end position="237"/>
    </location>
</feature>
<feature type="domain" description="Peptidase S1" evidence="2">
    <location>
        <begin position="6"/>
        <end position="229"/>
    </location>
</feature>
<feature type="active site" description="Charge relay system" evidence="1">
    <location>
        <position position="46"/>
    </location>
</feature>
<feature type="active site" description="Charge relay system" evidence="1">
    <location>
        <position position="91"/>
    </location>
</feature>
<feature type="active site" description="Charge relay system" evidence="1">
    <location>
        <position position="185"/>
    </location>
</feature>
<feature type="glycosylation site" description="N-linked (GlcNAc...) asparagine" evidence="5">
    <location>
        <position position="25"/>
    </location>
</feature>
<feature type="glycosylation site" description="O-linked (GalNAc...) serine" evidence="5">
    <location>
        <position position="28"/>
    </location>
</feature>
<feature type="disulfide bond" evidence="2">
    <location>
        <begin position="12"/>
        <end position="144"/>
    </location>
</feature>
<feature type="disulfide bond" evidence="2">
    <location>
        <begin position="31"/>
        <end position="47"/>
    </location>
</feature>
<feature type="disulfide bond" evidence="2">
    <location>
        <begin position="79"/>
        <end position="236"/>
    </location>
</feature>
<feature type="disulfide bond" evidence="2">
    <location>
        <begin position="123"/>
        <end position="191"/>
    </location>
</feature>
<feature type="disulfide bond" evidence="2">
    <location>
        <begin position="155"/>
        <end position="170"/>
    </location>
</feature>
<feature type="disulfide bond" evidence="2">
    <location>
        <begin position="181"/>
        <end position="205"/>
    </location>
</feature>
<feature type="sequence conflict" description="In Ref. 2; AAQ62580." evidence="6" ref="2">
    <original>R</original>
    <variation>P</variation>
    <location>
        <position position="18"/>
    </location>
</feature>
<feature type="sequence conflict" description="In Ref. 2; AAQ62580." evidence="6" ref="2">
    <original>Y</original>
    <variation>F</variation>
    <location>
        <position position="24"/>
    </location>
</feature>
<feature type="sequence conflict" description="In Ref. 2; AAQ62580." evidence="6" ref="2">
    <original>R</original>
    <variation>K</variation>
    <location>
        <position position="82"/>
    </location>
</feature>
<feature type="sequence conflict" description="In Ref. 2; AAQ62580." evidence="6" ref="2">
    <original>D</original>
    <variation>N</variation>
    <location>
        <position position="85"/>
    </location>
</feature>
<feature type="sequence conflict" description="In Ref. 2; AAQ62580." evidence="6" ref="2">
    <original>Y</original>
    <variation>L</variation>
    <location>
        <position position="124"/>
    </location>
</feature>
<feature type="sequence conflict" description="In Ref. 2; AAQ62580." evidence="6" ref="2">
    <original>D</original>
    <variation>N</variation>
    <location>
        <position position="151"/>
    </location>
</feature>
<feature type="sequence conflict" description="In Ref. 2; AAQ62580." evidence="6" ref="2">
    <original>ST</original>
    <variation>ID</variation>
    <location>
        <begin position="166"/>
        <end position="167"/>
    </location>
</feature>
<feature type="non-terminal residue">
    <location>
        <position position="1"/>
    </location>
</feature>
<reference key="1">
    <citation type="journal article" date="1995" name="Biochemistry">
        <title>Purification, characterization, and amino acid sequence of a serine proteinase, PA-BJ, with platelet-aggregating activity from the venom of Bothrops jararaca.</title>
        <authorList>
            <person name="Serrano S.M.T."/>
            <person name="Mentele R."/>
            <person name="Sampaio C.A.M."/>
            <person name="Fink E."/>
        </authorList>
    </citation>
    <scope>PROTEIN SEQUENCE OF 6-237</scope>
    <scope>FUNCTION</scope>
    <scope>GLYCOSYLATION AT ASN-25 AND SER-28</scope>
    <source>
        <tissue>Venom gland</tissue>
    </source>
</reference>
<reference key="2">
    <citation type="submission" date="2003-08" db="EMBL/GenBank/DDBJ databases">
        <title>Molecular cloning and sequence analysis of a cDNA encoding PA-BJ, a platelet-aggregating serine peptidase from the venom of Bothrops jararaca.</title>
        <authorList>
            <person name="Assakura M.T."/>
            <person name="Teixeira B.C."/>
            <person name="Camargo A.C.M."/>
            <person name="Serrano S.M.T."/>
        </authorList>
    </citation>
    <scope>NUCLEOTIDE SEQUENCE [MRNA] OF 1-167</scope>
    <source>
        <tissue>Venom</tissue>
    </source>
</reference>
<reference key="3">
    <citation type="journal article" date="2000" name="FEBS Lett.">
        <title>Interaction of viper venom serine peptidases with thrombin receptors on human platelets.</title>
        <authorList>
            <person name="Santos B.F."/>
            <person name="Serrano S.M.T."/>
            <person name="Kuliopulos A."/>
            <person name="Niewiarowski S."/>
        </authorList>
    </citation>
    <scope>FUNCTION</scope>
</reference>
<reference key="4">
    <citation type="journal article" date="2010" name="J. Proteome Res.">
        <title>Analysis of the ontogenetic variation in the venom proteome/peptidome of Bothrops jararaca reveals different strategies to deal with prey.</title>
        <authorList>
            <person name="Zelanis A."/>
            <person name="Tashima A.K."/>
            <person name="Rocha M.M."/>
            <person name="Furtado M.F."/>
            <person name="Camargo A.C."/>
            <person name="Ho P.L."/>
            <person name="Serrano S.M."/>
        </authorList>
    </citation>
    <scope>IDENTIFICATION BY MASS SPECTROMETRY</scope>
    <scope>DEVELOPMENTAL STAGE</scope>
    <source>
        <tissue>Venom</tissue>
    </source>
</reference>
<reference key="5">
    <citation type="journal article" date="2004" name="J. Mol. Recognit.">
        <title>Identification of the substrate-binding exosites of two snake venom serine proteinases: molecular basis for the partition of two essential functions of thrombin.</title>
        <authorList>
            <person name="Maroun R.C."/>
            <person name="Serrano S.M.T."/>
        </authorList>
    </citation>
    <scope>3D-STRUCTURE MODELING</scope>
</reference>
<proteinExistence type="evidence at protein level"/>
<sequence>NSLVIVVGGRPCKINVHRSLVLLYNSSSLLCSGTLINQEWVLTAAHCDSKNFKMKLGVHSIKIRNKNERTRHPKEKFICPNRKKDDVLDKDIMLIRLNRPVSNSEHIAPLSLPSSPPSVGSVCYVMGWGKISSTKETYPDVPHCAKINILDHAVCRAAYTWWPATSTTLCAGILQGGKDTCEGDSGGPLICNGLQGIVSGGGNPCGQPRKPALYTKVFDYLPWIESIIAGTTTATCP</sequence>
<protein>
    <recommendedName>
        <fullName>Platelet-aggregating proteinase PA-BJ</fullName>
        <ecNumber>3.4.21.-</ecNumber>
    </recommendedName>
    <alternativeName>
        <fullName>Snake venom serine protease</fullName>
        <shortName>SVSP</shortName>
    </alternativeName>
</protein>
<accession>P81824</accession>
<accession>Q6URK9</accession>
<evidence type="ECO:0000250" key="1"/>
<evidence type="ECO:0000255" key="2">
    <source>
        <dbReference type="PROSITE-ProRule" id="PRU00274"/>
    </source>
</evidence>
<evidence type="ECO:0000269" key="3">
    <source>
    </source>
</evidence>
<evidence type="ECO:0000269" key="4">
    <source>
    </source>
</evidence>
<evidence type="ECO:0000269" key="5">
    <source>
    </source>
</evidence>
<evidence type="ECO:0000305" key="6"/>
<evidence type="ECO:0000305" key="7">
    <source>
    </source>
</evidence>
<organism>
    <name type="scientific">Bothrops jararaca</name>
    <name type="common">Jararaca</name>
    <name type="synonym">Bothrops jajaraca</name>
    <dbReference type="NCBI Taxonomy" id="8724"/>
    <lineage>
        <taxon>Eukaryota</taxon>
        <taxon>Metazoa</taxon>
        <taxon>Chordata</taxon>
        <taxon>Craniata</taxon>
        <taxon>Vertebrata</taxon>
        <taxon>Euteleostomi</taxon>
        <taxon>Lepidosauria</taxon>
        <taxon>Squamata</taxon>
        <taxon>Bifurcata</taxon>
        <taxon>Unidentata</taxon>
        <taxon>Episquamata</taxon>
        <taxon>Toxicofera</taxon>
        <taxon>Serpentes</taxon>
        <taxon>Colubroidea</taxon>
        <taxon>Viperidae</taxon>
        <taxon>Crotalinae</taxon>
        <taxon>Bothrops</taxon>
    </lineage>
</organism>
<dbReference type="EC" id="3.4.21.-"/>
<dbReference type="EMBL" id="AY363221">
    <property type="protein sequence ID" value="AAQ62580.1"/>
    <property type="molecule type" value="mRNA"/>
</dbReference>
<dbReference type="SMR" id="P81824"/>
<dbReference type="MEROPS" id="S01.180"/>
<dbReference type="iPTMnet" id="P81824"/>
<dbReference type="GO" id="GO:0005576">
    <property type="term" value="C:extracellular region"/>
    <property type="evidence" value="ECO:0007669"/>
    <property type="project" value="UniProtKB-SubCell"/>
</dbReference>
<dbReference type="GO" id="GO:0030141">
    <property type="term" value="C:secretory granule"/>
    <property type="evidence" value="ECO:0007669"/>
    <property type="project" value="TreeGrafter"/>
</dbReference>
<dbReference type="GO" id="GO:0004252">
    <property type="term" value="F:serine-type endopeptidase activity"/>
    <property type="evidence" value="ECO:0007669"/>
    <property type="project" value="InterPro"/>
</dbReference>
<dbReference type="GO" id="GO:0090729">
    <property type="term" value="F:toxin activity"/>
    <property type="evidence" value="ECO:0007669"/>
    <property type="project" value="UniProtKB-KW"/>
</dbReference>
<dbReference type="GO" id="GO:0006508">
    <property type="term" value="P:proteolysis"/>
    <property type="evidence" value="ECO:0007669"/>
    <property type="project" value="UniProtKB-KW"/>
</dbReference>
<dbReference type="CDD" id="cd00190">
    <property type="entry name" value="Tryp_SPc"/>
    <property type="match status" value="1"/>
</dbReference>
<dbReference type="FunFam" id="2.40.10.10:FF:000158">
    <property type="entry name" value="Thrombin-like enzyme saxthrombin"/>
    <property type="match status" value="1"/>
</dbReference>
<dbReference type="FunFam" id="2.40.10.10:FF:000153">
    <property type="entry name" value="Venom plasminogen activator TSV-PA"/>
    <property type="match status" value="1"/>
</dbReference>
<dbReference type="Gene3D" id="2.40.10.10">
    <property type="entry name" value="Trypsin-like serine proteases"/>
    <property type="match status" value="2"/>
</dbReference>
<dbReference type="InterPro" id="IPR009003">
    <property type="entry name" value="Peptidase_S1_PA"/>
</dbReference>
<dbReference type="InterPro" id="IPR043504">
    <property type="entry name" value="Peptidase_S1_PA_chymotrypsin"/>
</dbReference>
<dbReference type="InterPro" id="IPR001314">
    <property type="entry name" value="Peptidase_S1A"/>
</dbReference>
<dbReference type="InterPro" id="IPR001254">
    <property type="entry name" value="Trypsin_dom"/>
</dbReference>
<dbReference type="InterPro" id="IPR018114">
    <property type="entry name" value="TRYPSIN_HIS"/>
</dbReference>
<dbReference type="InterPro" id="IPR033116">
    <property type="entry name" value="TRYPSIN_SER"/>
</dbReference>
<dbReference type="PANTHER" id="PTHR24271:SF47">
    <property type="entry name" value="KALLIKREIN-1"/>
    <property type="match status" value="1"/>
</dbReference>
<dbReference type="PANTHER" id="PTHR24271">
    <property type="entry name" value="KALLIKREIN-RELATED"/>
    <property type="match status" value="1"/>
</dbReference>
<dbReference type="Pfam" id="PF00089">
    <property type="entry name" value="Trypsin"/>
    <property type="match status" value="1"/>
</dbReference>
<dbReference type="PRINTS" id="PR00722">
    <property type="entry name" value="CHYMOTRYPSIN"/>
</dbReference>
<dbReference type="SMART" id="SM00020">
    <property type="entry name" value="Tryp_SPc"/>
    <property type="match status" value="1"/>
</dbReference>
<dbReference type="SUPFAM" id="SSF50494">
    <property type="entry name" value="Trypsin-like serine proteases"/>
    <property type="match status" value="1"/>
</dbReference>
<dbReference type="PROSITE" id="PS50240">
    <property type="entry name" value="TRYPSIN_DOM"/>
    <property type="match status" value="1"/>
</dbReference>
<dbReference type="PROSITE" id="PS00134">
    <property type="entry name" value="TRYPSIN_HIS"/>
    <property type="match status" value="1"/>
</dbReference>
<dbReference type="PROSITE" id="PS00135">
    <property type="entry name" value="TRYPSIN_SER"/>
    <property type="match status" value="1"/>
</dbReference>